<protein>
    <recommendedName>
        <fullName evidence="1">ATP synthase subunit b, chloroplastic</fullName>
    </recommendedName>
    <alternativeName>
        <fullName evidence="1">ATP synthase F(0) sector subunit b</fullName>
    </alternativeName>
    <alternativeName>
        <fullName evidence="1">ATPase subunit I</fullName>
    </alternativeName>
</protein>
<gene>
    <name evidence="1" type="primary">atpF</name>
</gene>
<accession>A8SE63</accession>
<reference key="1">
    <citation type="journal article" date="2007" name="Proc. Natl. Acad. Sci. U.S.A.">
        <title>Using plastid genome-scale data to resolve enigmatic relationships among basal angiosperms.</title>
        <authorList>
            <person name="Moore M.J."/>
            <person name="Bell C.D."/>
            <person name="Soltis P.S."/>
            <person name="Soltis D.E."/>
        </authorList>
    </citation>
    <scope>NUCLEOTIDE SEQUENCE [LARGE SCALE GENOMIC DNA]</scope>
</reference>
<comment type="function">
    <text evidence="1">F(1)F(0) ATP synthase produces ATP from ADP in the presence of a proton or sodium gradient. F-type ATPases consist of two structural domains, F(1) containing the extramembraneous catalytic core and F(0) containing the membrane proton channel, linked together by a central stalk and a peripheral stalk. During catalysis, ATP synthesis in the catalytic domain of F(1) is coupled via a rotary mechanism of the central stalk subunits to proton translocation.</text>
</comment>
<comment type="function">
    <text evidence="1">Component of the F(0) channel, it forms part of the peripheral stalk, linking F(1) to F(0).</text>
</comment>
<comment type="subunit">
    <text evidence="1">F-type ATPases have 2 components, F(1) - the catalytic core - and F(0) - the membrane proton channel. F(1) has five subunits: alpha(3), beta(3), gamma(1), delta(1), epsilon(1). F(0) has four main subunits: a(1), b(1), b'(1) and c(10-14). The alpha and beta chains form an alternating ring which encloses part of the gamma chain. F(1) is attached to F(0) by a central stalk formed by the gamma and epsilon chains, while a peripheral stalk is formed by the delta, b and b' chains.</text>
</comment>
<comment type="subcellular location">
    <subcellularLocation>
        <location evidence="1">Plastid</location>
        <location evidence="1">Chloroplast thylakoid membrane</location>
        <topology evidence="1">Single-pass membrane protein</topology>
    </subcellularLocation>
</comment>
<comment type="miscellaneous">
    <text>In plastids the F-type ATPase is also known as CF(1)CF(0).</text>
</comment>
<comment type="similarity">
    <text evidence="1">Belongs to the ATPase B chain family.</text>
</comment>
<sequence length="184" mass="21052">MKNVTDSFVSLGDWPYAGSFAFNTDILATNPINLSVVLGVLIFFGKGVLSDLLDNRKQKILSSIRNSEELRAKAIEQLEKARARLRKVEIEADKFRVNGYSEIEREKGNLINSTYENLQRLENYKNEAIQFEQQRTINQVRQRVFQQALQEALETLNSCLNSELHLRTISANIVMLGVMKEITD</sequence>
<evidence type="ECO:0000255" key="1">
    <source>
        <dbReference type="HAMAP-Rule" id="MF_01398"/>
    </source>
</evidence>
<name>ATPF_CERDE</name>
<organism>
    <name type="scientific">Ceratophyllum demersum</name>
    <name type="common">Rigid hornwort</name>
    <name type="synonym">Coontail</name>
    <dbReference type="NCBI Taxonomy" id="4428"/>
    <lineage>
        <taxon>Eukaryota</taxon>
        <taxon>Viridiplantae</taxon>
        <taxon>Streptophyta</taxon>
        <taxon>Embryophyta</taxon>
        <taxon>Tracheophyta</taxon>
        <taxon>Spermatophyta</taxon>
        <taxon>Magnoliopsida</taxon>
        <taxon>Ceratophyllales</taxon>
        <taxon>Ceratophyllaceae</taxon>
        <taxon>Ceratophyllum</taxon>
    </lineage>
</organism>
<dbReference type="EMBL" id="EF614270">
    <property type="protein sequence ID" value="ABQ81436.1"/>
    <property type="molecule type" value="Genomic_DNA"/>
</dbReference>
<dbReference type="RefSeq" id="YP_001542433.1">
    <property type="nucleotide sequence ID" value="NC_009962.1"/>
</dbReference>
<dbReference type="SMR" id="A8SE63"/>
<dbReference type="GeneID" id="5729467"/>
<dbReference type="GO" id="GO:0009535">
    <property type="term" value="C:chloroplast thylakoid membrane"/>
    <property type="evidence" value="ECO:0007669"/>
    <property type="project" value="UniProtKB-SubCell"/>
</dbReference>
<dbReference type="GO" id="GO:0045259">
    <property type="term" value="C:proton-transporting ATP synthase complex"/>
    <property type="evidence" value="ECO:0007669"/>
    <property type="project" value="UniProtKB-KW"/>
</dbReference>
<dbReference type="GO" id="GO:0046933">
    <property type="term" value="F:proton-transporting ATP synthase activity, rotational mechanism"/>
    <property type="evidence" value="ECO:0007669"/>
    <property type="project" value="UniProtKB-UniRule"/>
</dbReference>
<dbReference type="CDD" id="cd06503">
    <property type="entry name" value="ATP-synt_Fo_b"/>
    <property type="match status" value="1"/>
</dbReference>
<dbReference type="HAMAP" id="MF_01398">
    <property type="entry name" value="ATP_synth_b_bprime"/>
    <property type="match status" value="1"/>
</dbReference>
<dbReference type="InterPro" id="IPR002146">
    <property type="entry name" value="ATP_synth_b/b'su_bac/chlpt"/>
</dbReference>
<dbReference type="PANTHER" id="PTHR34264">
    <property type="entry name" value="ATP SYNTHASE SUBUNIT B, CHLOROPLASTIC"/>
    <property type="match status" value="1"/>
</dbReference>
<dbReference type="PANTHER" id="PTHR34264:SF3">
    <property type="entry name" value="ATP SYNTHASE SUBUNIT B, CHLOROPLASTIC"/>
    <property type="match status" value="1"/>
</dbReference>
<dbReference type="Pfam" id="PF00430">
    <property type="entry name" value="ATP-synt_B"/>
    <property type="match status" value="1"/>
</dbReference>
<keyword id="KW-0066">ATP synthesis</keyword>
<keyword id="KW-0138">CF(0)</keyword>
<keyword id="KW-0150">Chloroplast</keyword>
<keyword id="KW-0375">Hydrogen ion transport</keyword>
<keyword id="KW-0406">Ion transport</keyword>
<keyword id="KW-0472">Membrane</keyword>
<keyword id="KW-0934">Plastid</keyword>
<keyword id="KW-0793">Thylakoid</keyword>
<keyword id="KW-0812">Transmembrane</keyword>
<keyword id="KW-1133">Transmembrane helix</keyword>
<keyword id="KW-0813">Transport</keyword>
<geneLocation type="chloroplast"/>
<proteinExistence type="inferred from homology"/>
<feature type="chain" id="PRO_0000368914" description="ATP synthase subunit b, chloroplastic">
    <location>
        <begin position="1"/>
        <end position="184"/>
    </location>
</feature>
<feature type="transmembrane region" description="Helical" evidence="1">
    <location>
        <begin position="27"/>
        <end position="49"/>
    </location>
</feature>